<name>KBX32_OPICA</name>
<proteinExistence type="inferred from homology"/>
<sequence length="95" mass="10380">MNNKLTALIFHGLLAIASCKWLNEKSIQNKIDEKIGKNFLGGMAKAVVHKLAKNEFMCMANMDPTGSCETHCQKASGEKGYCHGTKCKCGVPLSY</sequence>
<dbReference type="EMBL" id="AY423483">
    <property type="protein sequence ID" value="AAQ94354.1"/>
    <property type="molecule type" value="mRNA"/>
</dbReference>
<dbReference type="EMBL" id="AY423482">
    <property type="protein sequence ID" value="AAQ94353.1"/>
    <property type="molecule type" value="mRNA"/>
</dbReference>
<dbReference type="SMR" id="Q5WR01"/>
<dbReference type="GO" id="GO:0005576">
    <property type="term" value="C:extracellular region"/>
    <property type="evidence" value="ECO:0007669"/>
    <property type="project" value="UniProtKB-SubCell"/>
</dbReference>
<dbReference type="GO" id="GO:0090729">
    <property type="term" value="F:toxin activity"/>
    <property type="evidence" value="ECO:0007669"/>
    <property type="project" value="UniProtKB-KW"/>
</dbReference>
<dbReference type="GO" id="GO:0042742">
    <property type="term" value="P:defense response to bacterium"/>
    <property type="evidence" value="ECO:0007669"/>
    <property type="project" value="UniProtKB-KW"/>
</dbReference>
<dbReference type="GO" id="GO:0050832">
    <property type="term" value="P:defense response to fungus"/>
    <property type="evidence" value="ECO:0007669"/>
    <property type="project" value="UniProtKB-KW"/>
</dbReference>
<dbReference type="GO" id="GO:0031640">
    <property type="term" value="P:killing of cells of another organism"/>
    <property type="evidence" value="ECO:0007669"/>
    <property type="project" value="UniProtKB-KW"/>
</dbReference>
<dbReference type="InterPro" id="IPR029237">
    <property type="entry name" value="Long_scorpion_toxin_alpha/beta"/>
</dbReference>
<dbReference type="InterPro" id="IPR036574">
    <property type="entry name" value="Scorpion_toxin-like_sf"/>
</dbReference>
<dbReference type="Pfam" id="PF14866">
    <property type="entry name" value="Scorpion_toxin_alpha-beta"/>
    <property type="match status" value="1"/>
</dbReference>
<dbReference type="SUPFAM" id="SSF57095">
    <property type="entry name" value="Scorpion toxin-like"/>
    <property type="match status" value="1"/>
</dbReference>
<dbReference type="PROSITE" id="PS51862">
    <property type="entry name" value="BSPN_CSAB"/>
    <property type="match status" value="1"/>
</dbReference>
<comment type="function">
    <text evidence="1">Has antimicrobial activity against yeasts and bacteria.</text>
</comment>
<comment type="subcellular location">
    <subcellularLocation>
        <location evidence="6">Secreted</location>
    </subcellularLocation>
</comment>
<comment type="tissue specificity">
    <text evidence="6">Expressed by the venom gland.</text>
</comment>
<comment type="similarity">
    <text evidence="5">Belongs to the long chain scorpion toxin family. Class 3 subfamily.</text>
</comment>
<keyword id="KW-0044">Antibiotic</keyword>
<keyword id="KW-0929">Antimicrobial</keyword>
<keyword id="KW-1015">Disulfide bond</keyword>
<keyword id="KW-0295">Fungicide</keyword>
<keyword id="KW-0964">Secreted</keyword>
<keyword id="KW-0732">Signal</keyword>
<keyword id="KW-0800">Toxin</keyword>
<feature type="signal peptide" evidence="2">
    <location>
        <begin position="1"/>
        <end position="19"/>
    </location>
</feature>
<feature type="chain" id="PRO_5000092272" description="Opiscorpine-2" evidence="6">
    <location>
        <begin position="20"/>
        <end position="95"/>
    </location>
</feature>
<feature type="domain" description="BetaSPN-type CS-alpha/beta" evidence="3">
    <location>
        <begin position="55"/>
        <end position="95"/>
    </location>
</feature>
<feature type="disulfide bond" evidence="3">
    <location>
        <begin position="58"/>
        <end position="82"/>
    </location>
</feature>
<feature type="disulfide bond" evidence="3">
    <location>
        <begin position="68"/>
        <end position="87"/>
    </location>
</feature>
<feature type="disulfide bond" evidence="3">
    <location>
        <begin position="72"/>
        <end position="89"/>
    </location>
</feature>
<feature type="sequence variant">
    <original>H</original>
    <variation>L</variation>
    <location>
        <position position="11"/>
    </location>
</feature>
<reference key="1">
    <citation type="journal article" date="2004" name="Cell. Mol. Life Sci.">
        <title>The scorpine family of defensins: gene structure, alternative polyadenylation and fold recognition.</title>
        <authorList>
            <person name="Zhu S."/>
            <person name="Tytgat J."/>
        </authorList>
    </citation>
    <scope>NUCLEOTIDE SEQUENCE [MRNA]</scope>
    <source>
        <tissue>Venom gland</tissue>
    </source>
</reference>
<protein>
    <recommendedName>
        <fullName evidence="4">Opiscorpine-2</fullName>
    </recommendedName>
</protein>
<accession>Q5WR01</accession>
<accession>Q5WR02</accession>
<organism>
    <name type="scientific">Opistophthalmus carinatus</name>
    <name type="common">African yellow leg scorpion</name>
    <dbReference type="NCBI Taxonomy" id="190115"/>
    <lineage>
        <taxon>Eukaryota</taxon>
        <taxon>Metazoa</taxon>
        <taxon>Ecdysozoa</taxon>
        <taxon>Arthropoda</taxon>
        <taxon>Chelicerata</taxon>
        <taxon>Arachnida</taxon>
        <taxon>Scorpiones</taxon>
        <taxon>Iurida</taxon>
        <taxon>Scorpionoidea</taxon>
        <taxon>Scorpionidae</taxon>
        <taxon>Opistophthalminae</taxon>
        <taxon>Opistophthalmus</taxon>
    </lineage>
</organism>
<evidence type="ECO:0000250" key="1">
    <source>
        <dbReference type="UniProtKB" id="Q5WR03"/>
    </source>
</evidence>
<evidence type="ECO:0000255" key="2"/>
<evidence type="ECO:0000255" key="3">
    <source>
        <dbReference type="PROSITE-ProRule" id="PRU01209"/>
    </source>
</evidence>
<evidence type="ECO:0000303" key="4">
    <source>
    </source>
</evidence>
<evidence type="ECO:0000305" key="5"/>
<evidence type="ECO:0000305" key="6">
    <source>
    </source>
</evidence>